<protein>
    <recommendedName>
        <fullName>Probable CtpA-like serine protease</fullName>
        <ecNumber>3.4.21.-</ecNumber>
    </recommendedName>
</protein>
<accession>Q4L6D0</accession>
<dbReference type="EC" id="3.4.21.-"/>
<dbReference type="EMBL" id="AP006716">
    <property type="protein sequence ID" value="BAE04795.1"/>
    <property type="status" value="ALT_INIT"/>
    <property type="molecule type" value="Genomic_DNA"/>
</dbReference>
<dbReference type="SMR" id="Q4L6D0"/>
<dbReference type="KEGG" id="sha:SH1486"/>
<dbReference type="eggNOG" id="COG0793">
    <property type="taxonomic scope" value="Bacteria"/>
</dbReference>
<dbReference type="HOGENOM" id="CLU_017295_3_0_9"/>
<dbReference type="Proteomes" id="UP000000543">
    <property type="component" value="Chromosome"/>
</dbReference>
<dbReference type="GO" id="GO:0030288">
    <property type="term" value="C:outer membrane-bounded periplasmic space"/>
    <property type="evidence" value="ECO:0007669"/>
    <property type="project" value="TreeGrafter"/>
</dbReference>
<dbReference type="GO" id="GO:0005886">
    <property type="term" value="C:plasma membrane"/>
    <property type="evidence" value="ECO:0007669"/>
    <property type="project" value="UniProtKB-SubCell"/>
</dbReference>
<dbReference type="GO" id="GO:0004175">
    <property type="term" value="F:endopeptidase activity"/>
    <property type="evidence" value="ECO:0007669"/>
    <property type="project" value="TreeGrafter"/>
</dbReference>
<dbReference type="GO" id="GO:0008236">
    <property type="term" value="F:serine-type peptidase activity"/>
    <property type="evidence" value="ECO:0007669"/>
    <property type="project" value="UniProtKB-KW"/>
</dbReference>
<dbReference type="GO" id="GO:0006508">
    <property type="term" value="P:proteolysis"/>
    <property type="evidence" value="ECO:0007669"/>
    <property type="project" value="UniProtKB-KW"/>
</dbReference>
<dbReference type="GO" id="GO:0007165">
    <property type="term" value="P:signal transduction"/>
    <property type="evidence" value="ECO:0007669"/>
    <property type="project" value="TreeGrafter"/>
</dbReference>
<dbReference type="CDD" id="cd06782">
    <property type="entry name" value="cpPDZ_CPP-like"/>
    <property type="match status" value="1"/>
</dbReference>
<dbReference type="CDD" id="cd07560">
    <property type="entry name" value="Peptidase_S41_CPP"/>
    <property type="match status" value="1"/>
</dbReference>
<dbReference type="FunFam" id="2.30.42.10:FF:000063">
    <property type="entry name" value="Peptidase, S41 family"/>
    <property type="match status" value="1"/>
</dbReference>
<dbReference type="FunFam" id="3.30.750.44:FF:000001">
    <property type="entry name" value="S41 family peptidase"/>
    <property type="match status" value="1"/>
</dbReference>
<dbReference type="Gene3D" id="2.30.42.10">
    <property type="match status" value="1"/>
</dbReference>
<dbReference type="Gene3D" id="3.30.750.44">
    <property type="match status" value="1"/>
</dbReference>
<dbReference type="Gene3D" id="3.90.226.10">
    <property type="entry name" value="2-enoyl-CoA Hydratase, Chain A, domain 1"/>
    <property type="match status" value="1"/>
</dbReference>
<dbReference type="Gene3D" id="1.10.101.10">
    <property type="entry name" value="PGBD-like superfamily/PGBD"/>
    <property type="match status" value="1"/>
</dbReference>
<dbReference type="InterPro" id="IPR029045">
    <property type="entry name" value="ClpP/crotonase-like_dom_sf"/>
</dbReference>
<dbReference type="InterPro" id="IPR055210">
    <property type="entry name" value="CtpA/B_N"/>
</dbReference>
<dbReference type="InterPro" id="IPR001478">
    <property type="entry name" value="PDZ"/>
</dbReference>
<dbReference type="InterPro" id="IPR036034">
    <property type="entry name" value="PDZ_sf"/>
</dbReference>
<dbReference type="InterPro" id="IPR004447">
    <property type="entry name" value="Peptidase_S41A"/>
</dbReference>
<dbReference type="InterPro" id="IPR002477">
    <property type="entry name" value="Peptidoglycan-bd-like"/>
</dbReference>
<dbReference type="InterPro" id="IPR036365">
    <property type="entry name" value="PGBD-like_sf"/>
</dbReference>
<dbReference type="InterPro" id="IPR036366">
    <property type="entry name" value="PGBDSf"/>
</dbReference>
<dbReference type="InterPro" id="IPR005151">
    <property type="entry name" value="Tail-specific_protease"/>
</dbReference>
<dbReference type="NCBIfam" id="TIGR00225">
    <property type="entry name" value="prc"/>
    <property type="match status" value="1"/>
</dbReference>
<dbReference type="PANTHER" id="PTHR32060:SF30">
    <property type="entry name" value="CARBOXY-TERMINAL PROCESSING PROTEASE CTPA"/>
    <property type="match status" value="1"/>
</dbReference>
<dbReference type="PANTHER" id="PTHR32060">
    <property type="entry name" value="TAIL-SPECIFIC PROTEASE"/>
    <property type="match status" value="1"/>
</dbReference>
<dbReference type="Pfam" id="PF22694">
    <property type="entry name" value="CtpB_N-like"/>
    <property type="match status" value="1"/>
</dbReference>
<dbReference type="Pfam" id="PF13180">
    <property type="entry name" value="PDZ_2"/>
    <property type="match status" value="1"/>
</dbReference>
<dbReference type="Pfam" id="PF03572">
    <property type="entry name" value="Peptidase_S41"/>
    <property type="match status" value="1"/>
</dbReference>
<dbReference type="Pfam" id="PF01471">
    <property type="entry name" value="PG_binding_1"/>
    <property type="match status" value="1"/>
</dbReference>
<dbReference type="SMART" id="SM00228">
    <property type="entry name" value="PDZ"/>
    <property type="match status" value="1"/>
</dbReference>
<dbReference type="SMART" id="SM00245">
    <property type="entry name" value="TSPc"/>
    <property type="match status" value="1"/>
</dbReference>
<dbReference type="SUPFAM" id="SSF52096">
    <property type="entry name" value="ClpP/crotonase"/>
    <property type="match status" value="1"/>
</dbReference>
<dbReference type="SUPFAM" id="SSF50156">
    <property type="entry name" value="PDZ domain-like"/>
    <property type="match status" value="1"/>
</dbReference>
<dbReference type="SUPFAM" id="SSF47090">
    <property type="entry name" value="PGBD-like"/>
    <property type="match status" value="1"/>
</dbReference>
<dbReference type="PROSITE" id="PS50106">
    <property type="entry name" value="PDZ"/>
    <property type="match status" value="1"/>
</dbReference>
<keyword id="KW-1003">Cell membrane</keyword>
<keyword id="KW-0378">Hydrolase</keyword>
<keyword id="KW-0472">Membrane</keyword>
<keyword id="KW-0645">Protease</keyword>
<keyword id="KW-0720">Serine protease</keyword>
<keyword id="KW-0812">Transmembrane</keyword>
<keyword id="KW-1133">Transmembrane helix</keyword>
<proteinExistence type="inferred from homology"/>
<evidence type="ECO:0000250" key="1"/>
<evidence type="ECO:0000255" key="2"/>
<evidence type="ECO:0000255" key="3">
    <source>
        <dbReference type="PROSITE-ProRule" id="PRU00143"/>
    </source>
</evidence>
<evidence type="ECO:0000256" key="4">
    <source>
        <dbReference type="SAM" id="MobiDB-lite"/>
    </source>
</evidence>
<evidence type="ECO:0000305" key="5"/>
<name>CTPAL_STAHJ</name>
<gene>
    <name type="ordered locus">SH1486</name>
</gene>
<reference key="1">
    <citation type="journal article" date="2005" name="J. Bacteriol.">
        <title>Whole-genome sequencing of Staphylococcus haemolyticus uncovers the extreme plasticity of its genome and the evolution of human-colonizing staphylococcal species.</title>
        <authorList>
            <person name="Takeuchi F."/>
            <person name="Watanabe S."/>
            <person name="Baba T."/>
            <person name="Yuzawa H."/>
            <person name="Ito T."/>
            <person name="Morimoto Y."/>
            <person name="Kuroda M."/>
            <person name="Cui L."/>
            <person name="Takahashi M."/>
            <person name="Ankai A."/>
            <person name="Baba S."/>
            <person name="Fukui S."/>
            <person name="Lee J.C."/>
            <person name="Hiramatsu K."/>
        </authorList>
    </citation>
    <scope>NUCLEOTIDE SEQUENCE [LARGE SCALE GENOMIC DNA]</scope>
    <source>
        <strain>JCSC1435</strain>
    </source>
</reference>
<organism>
    <name type="scientific">Staphylococcus haemolyticus (strain JCSC1435)</name>
    <dbReference type="NCBI Taxonomy" id="279808"/>
    <lineage>
        <taxon>Bacteria</taxon>
        <taxon>Bacillati</taxon>
        <taxon>Bacillota</taxon>
        <taxon>Bacilli</taxon>
        <taxon>Bacillales</taxon>
        <taxon>Staphylococcaceae</taxon>
        <taxon>Staphylococcus</taxon>
    </lineage>
</organism>
<sequence>MRKCFFMSHNPEEKQSNLDSNHKNESSSNKRIKFKTWQFILLLLGVVIITAGITVAATIGISHKISGLTKDERQEIKKIEYAYKTLNNDYYKKQNAGKLSEAAIDGMVKELKDPYSEYMTKDETKSFNEDVSGDFVGIGAEMQKKDKQIMITSPMKDSPAEKAGIQPKDVVTKVDGKSVVGKPLDQVVKLVRGKEGTTVKLTIKRGSQEKEIKIKRGKIHVKSVEYKKKDNIGVFTINKFQDNTAGELKSAIIKAHKDGVRSIVLDLRNNPGGLLDEAVKMANIFIDKDQTVVKLEKGDDTESIKTSNDASNEAKDMKVSILVNEGSASASEVFTGAMRDHKKAKVYGSKTFGKGIVQTTREFKDGSLLKYTQMKWLTPDGHNIHGKGIQPDTKIASPQYQSISVIPTDKSYSVGDNTKYVKSIKIGLDALGYNVNNDSKQFDTQLESAIKKFQSEHELSVNGKFDKKTNEKFTQLLVEKANKEDKVLDELINKLK</sequence>
<comment type="subcellular location">
    <subcellularLocation>
        <location evidence="5">Cell membrane</location>
        <topology evidence="5">Single-pass membrane protein</topology>
    </subcellularLocation>
</comment>
<comment type="similarity">
    <text evidence="5">Belongs to the peptidase S41A family.</text>
</comment>
<comment type="sequence caution" evidence="5">
    <conflict type="erroneous initiation">
        <sequence resource="EMBL-CDS" id="BAE04795"/>
    </conflict>
</comment>
<feature type="chain" id="PRO_0000233197" description="Probable CtpA-like serine protease">
    <location>
        <begin position="1"/>
        <end position="496"/>
    </location>
</feature>
<feature type="transmembrane region" description="Helical" evidence="2">
    <location>
        <begin position="39"/>
        <end position="59"/>
    </location>
</feature>
<feature type="domain" description="PDZ" evidence="3">
    <location>
        <begin position="124"/>
        <end position="206"/>
    </location>
</feature>
<feature type="region of interest" description="Disordered" evidence="4">
    <location>
        <begin position="1"/>
        <end position="26"/>
    </location>
</feature>
<feature type="compositionally biased region" description="Basic and acidic residues" evidence="4">
    <location>
        <begin position="10"/>
        <end position="25"/>
    </location>
</feature>
<feature type="active site" description="Charge relay system" evidence="1">
    <location>
        <position position="329"/>
    </location>
</feature>
<feature type="active site" description="Charge relay system" evidence="1">
    <location>
        <position position="340"/>
    </location>
</feature>
<feature type="active site" description="Charge relay system" evidence="1">
    <location>
        <position position="354"/>
    </location>
</feature>